<proteinExistence type="inferred from homology"/>
<organism>
    <name type="scientific">Kluyveromyces marxianus</name>
    <name type="common">Yeast</name>
    <name type="synonym">Candida kefyr</name>
    <dbReference type="NCBI Taxonomy" id="4911"/>
    <lineage>
        <taxon>Eukaryota</taxon>
        <taxon>Fungi</taxon>
        <taxon>Dikarya</taxon>
        <taxon>Ascomycota</taxon>
        <taxon>Saccharomycotina</taxon>
        <taxon>Saccharomycetes</taxon>
        <taxon>Saccharomycetales</taxon>
        <taxon>Saccharomycetaceae</taxon>
        <taxon>Kluyveromyces</taxon>
    </lineage>
</organism>
<evidence type="ECO:0000250" key="1"/>
<evidence type="ECO:0000305" key="2"/>
<dbReference type="EC" id="1.1.1.1"/>
<dbReference type="EMBL" id="AF225206">
    <property type="protein sequence ID" value="AAF91235.1"/>
    <property type="molecule type" value="Genomic_DNA"/>
</dbReference>
<dbReference type="SMR" id="Q9P4C2"/>
<dbReference type="VEuPathDB" id="FungiDB:KLMA_40220"/>
<dbReference type="GO" id="GO:0005737">
    <property type="term" value="C:cytoplasm"/>
    <property type="evidence" value="ECO:0007669"/>
    <property type="project" value="UniProtKB-SubCell"/>
</dbReference>
<dbReference type="GO" id="GO:0004022">
    <property type="term" value="F:alcohol dehydrogenase (NAD+) activity"/>
    <property type="evidence" value="ECO:0007669"/>
    <property type="project" value="UniProtKB-EC"/>
</dbReference>
<dbReference type="GO" id="GO:0008270">
    <property type="term" value="F:zinc ion binding"/>
    <property type="evidence" value="ECO:0007669"/>
    <property type="project" value="InterPro"/>
</dbReference>
<dbReference type="CDD" id="cd08297">
    <property type="entry name" value="CAD3"/>
    <property type="match status" value="1"/>
</dbReference>
<dbReference type="FunFam" id="3.40.50.720:FF:000039">
    <property type="entry name" value="Alcohol dehydrogenase AdhP"/>
    <property type="match status" value="1"/>
</dbReference>
<dbReference type="FunFam" id="3.90.180.10:FF:000002">
    <property type="entry name" value="Alcohol dehydrogenase AdhP"/>
    <property type="match status" value="1"/>
</dbReference>
<dbReference type="Gene3D" id="3.90.180.10">
    <property type="entry name" value="Medium-chain alcohol dehydrogenases, catalytic domain"/>
    <property type="match status" value="1"/>
</dbReference>
<dbReference type="Gene3D" id="3.40.50.720">
    <property type="entry name" value="NAD(P)-binding Rossmann-like Domain"/>
    <property type="match status" value="1"/>
</dbReference>
<dbReference type="InterPro" id="IPR013149">
    <property type="entry name" value="ADH-like_C"/>
</dbReference>
<dbReference type="InterPro" id="IPR013154">
    <property type="entry name" value="ADH-like_N"/>
</dbReference>
<dbReference type="InterPro" id="IPR002328">
    <property type="entry name" value="ADH_Zn_CS"/>
</dbReference>
<dbReference type="InterPro" id="IPR011032">
    <property type="entry name" value="GroES-like_sf"/>
</dbReference>
<dbReference type="InterPro" id="IPR036291">
    <property type="entry name" value="NAD(P)-bd_dom_sf"/>
</dbReference>
<dbReference type="InterPro" id="IPR020843">
    <property type="entry name" value="PKS_ER"/>
</dbReference>
<dbReference type="PANTHER" id="PTHR42940">
    <property type="entry name" value="ALCOHOL DEHYDROGENASE 1-RELATED"/>
    <property type="match status" value="1"/>
</dbReference>
<dbReference type="PANTHER" id="PTHR42940:SF3">
    <property type="entry name" value="ALCOHOL DEHYDROGENASE 1-RELATED"/>
    <property type="match status" value="1"/>
</dbReference>
<dbReference type="Pfam" id="PF08240">
    <property type="entry name" value="ADH_N"/>
    <property type="match status" value="1"/>
</dbReference>
<dbReference type="Pfam" id="PF00107">
    <property type="entry name" value="ADH_zinc_N"/>
    <property type="match status" value="1"/>
</dbReference>
<dbReference type="SMART" id="SM00829">
    <property type="entry name" value="PKS_ER"/>
    <property type="match status" value="1"/>
</dbReference>
<dbReference type="SUPFAM" id="SSF50129">
    <property type="entry name" value="GroES-like"/>
    <property type="match status" value="1"/>
</dbReference>
<dbReference type="SUPFAM" id="SSF51735">
    <property type="entry name" value="NAD(P)-binding Rossmann-fold domains"/>
    <property type="match status" value="1"/>
</dbReference>
<dbReference type="PROSITE" id="PS00059">
    <property type="entry name" value="ADH_ZINC"/>
    <property type="match status" value="1"/>
</dbReference>
<gene>
    <name type="primary">ADH2</name>
</gene>
<feature type="initiator methionine" description="Removed" evidence="1">
    <location>
        <position position="1"/>
    </location>
</feature>
<feature type="chain" id="PRO_0000160725" description="Alcohol dehydrogenase 2">
    <location>
        <begin position="2"/>
        <end position="348"/>
    </location>
</feature>
<feature type="binding site" evidence="1">
    <location>
        <position position="44"/>
    </location>
    <ligand>
        <name>Zn(2+)</name>
        <dbReference type="ChEBI" id="CHEBI:29105"/>
        <label>1</label>
        <note>catalytic</note>
    </ligand>
</feature>
<feature type="binding site" evidence="1">
    <location>
        <position position="67"/>
    </location>
    <ligand>
        <name>Zn(2+)</name>
        <dbReference type="ChEBI" id="CHEBI:29105"/>
        <label>1</label>
        <note>catalytic</note>
    </ligand>
</feature>
<feature type="binding site" evidence="1">
    <location>
        <position position="98"/>
    </location>
    <ligand>
        <name>Zn(2+)</name>
        <dbReference type="ChEBI" id="CHEBI:29105"/>
        <label>2</label>
    </ligand>
</feature>
<feature type="binding site" evidence="1">
    <location>
        <position position="101"/>
    </location>
    <ligand>
        <name>Zn(2+)</name>
        <dbReference type="ChEBI" id="CHEBI:29105"/>
        <label>2</label>
    </ligand>
</feature>
<feature type="binding site" evidence="1">
    <location>
        <position position="104"/>
    </location>
    <ligand>
        <name>Zn(2+)</name>
        <dbReference type="ChEBI" id="CHEBI:29105"/>
        <label>2</label>
    </ligand>
</feature>
<feature type="binding site" evidence="1">
    <location>
        <position position="112"/>
    </location>
    <ligand>
        <name>Zn(2+)</name>
        <dbReference type="ChEBI" id="CHEBI:29105"/>
        <label>2</label>
    </ligand>
</feature>
<feature type="binding site" evidence="1">
    <location>
        <position position="154"/>
    </location>
    <ligand>
        <name>Zn(2+)</name>
        <dbReference type="ChEBI" id="CHEBI:29105"/>
        <label>1</label>
        <note>catalytic</note>
    </ligand>
</feature>
<feature type="binding site" evidence="1">
    <location>
        <begin position="178"/>
        <end position="184"/>
    </location>
    <ligand>
        <name>NAD(+)</name>
        <dbReference type="ChEBI" id="CHEBI:57540"/>
    </ligand>
</feature>
<feature type="binding site" evidence="1">
    <location>
        <position position="202"/>
    </location>
    <ligand>
        <name>NAD(+)</name>
        <dbReference type="ChEBI" id="CHEBI:57540"/>
    </ligand>
</feature>
<feature type="binding site" evidence="1">
    <location>
        <position position="207"/>
    </location>
    <ligand>
        <name>NAD(+)</name>
        <dbReference type="ChEBI" id="CHEBI:57540"/>
    </ligand>
</feature>
<feature type="binding site" evidence="1">
    <location>
        <begin position="269"/>
        <end position="271"/>
    </location>
    <ligand>
        <name>NAD(+)</name>
        <dbReference type="ChEBI" id="CHEBI:57540"/>
    </ligand>
</feature>
<feature type="binding site" evidence="1">
    <location>
        <position position="341"/>
    </location>
    <ligand>
        <name>NAD(+)</name>
        <dbReference type="ChEBI" id="CHEBI:57540"/>
    </ligand>
</feature>
<feature type="modified residue" description="N-acetylserine" evidence="1">
    <location>
        <position position="2"/>
    </location>
</feature>
<protein>
    <recommendedName>
        <fullName>Alcohol dehydrogenase 2</fullName>
        <ecNumber>1.1.1.1</ecNumber>
    </recommendedName>
    <alternativeName>
        <fullName>Alcohol dehydrogenase II</fullName>
    </alternativeName>
</protein>
<name>ADH2_KLUMA</name>
<comment type="catalytic activity">
    <reaction>
        <text>a primary alcohol + NAD(+) = an aldehyde + NADH + H(+)</text>
        <dbReference type="Rhea" id="RHEA:10736"/>
        <dbReference type="ChEBI" id="CHEBI:15378"/>
        <dbReference type="ChEBI" id="CHEBI:15734"/>
        <dbReference type="ChEBI" id="CHEBI:17478"/>
        <dbReference type="ChEBI" id="CHEBI:57540"/>
        <dbReference type="ChEBI" id="CHEBI:57945"/>
        <dbReference type="EC" id="1.1.1.1"/>
    </reaction>
</comment>
<comment type="catalytic activity">
    <reaction>
        <text>a secondary alcohol + NAD(+) = a ketone + NADH + H(+)</text>
        <dbReference type="Rhea" id="RHEA:10740"/>
        <dbReference type="ChEBI" id="CHEBI:15378"/>
        <dbReference type="ChEBI" id="CHEBI:17087"/>
        <dbReference type="ChEBI" id="CHEBI:35681"/>
        <dbReference type="ChEBI" id="CHEBI:57540"/>
        <dbReference type="ChEBI" id="CHEBI:57945"/>
        <dbReference type="EC" id="1.1.1.1"/>
    </reaction>
</comment>
<comment type="cofactor">
    <cofactor evidence="1">
        <name>Zn(2+)</name>
        <dbReference type="ChEBI" id="CHEBI:29105"/>
    </cofactor>
    <text evidence="1">Binds 2 Zn(2+) ions per subunit.</text>
</comment>
<comment type="subunit">
    <text evidence="1">Homotetramer.</text>
</comment>
<comment type="subcellular location">
    <subcellularLocation>
        <location>Cytoplasm</location>
    </subcellularLocation>
</comment>
<comment type="similarity">
    <text evidence="2">Belongs to the zinc-containing alcohol dehydrogenase family.</text>
</comment>
<keyword id="KW-0007">Acetylation</keyword>
<keyword id="KW-0963">Cytoplasm</keyword>
<keyword id="KW-0479">Metal-binding</keyword>
<keyword id="KW-0520">NAD</keyword>
<keyword id="KW-0560">Oxidoreductase</keyword>
<keyword id="KW-0862">Zinc</keyword>
<reference key="1">
    <citation type="journal article" date="2000" name="Gene">
        <title>Kluyveromyces marxianus exhibits an ancestral Saccharomyces cerevisiae genome organization downstream of ADH2.</title>
        <authorList>
            <person name="Ladriere J.-M."/>
            <person name="Georis I."/>
            <person name="Guerineau M."/>
            <person name="Vandenhaute J."/>
        </authorList>
    </citation>
    <scope>NUCLEOTIDE SEQUENCE [GENOMIC DNA]</scope>
    <source>
        <strain>ATCC 12424 / NRRL Y-610</strain>
    </source>
</reference>
<sequence>MSIPTTQKGVIFYENGGQLYYKDIPVPKPKSNELLINVKYSGVCHTDLHAWKGDWPLDTKLPLVGGHEGAGVVVAMGDNVKGWKIGDLAGIKWLNGSCMNCEECELSNESNCPDADLSGYTHDGSFQQYATADAVQAAHIPAGTDLAQVAPILCAGVTVYKALKTAEMKAGDWVAISGAAGGLGSLAVQYAKAMGFRVLGIDGGEGKEELFKSLGGEVFIDFTKSKDIVGEVIKATNGGAHGVINVSVSEKAIESSIEYCRSNGTVVLVGLPKDAKCKSDVFNQVVKSIHIVGSYVGNRADTREALDFFCRGLVNAPIKVVGLSTLPEIYEKMEQGKVLGRYVVDTSK</sequence>
<accession>Q9P4C2</accession>